<reference key="1">
    <citation type="journal article" date="1998" name="Science">
        <title>Genome sequence of an obligate intracellular pathogen of humans: Chlamydia trachomatis.</title>
        <authorList>
            <person name="Stephens R.S."/>
            <person name="Kalman S."/>
            <person name="Lammel C.J."/>
            <person name="Fan J."/>
            <person name="Marathe R."/>
            <person name="Aravind L."/>
            <person name="Mitchell W.P."/>
            <person name="Olinger L."/>
            <person name="Tatusov R.L."/>
            <person name="Zhao Q."/>
            <person name="Koonin E.V."/>
            <person name="Davis R.W."/>
        </authorList>
    </citation>
    <scope>NUCLEOTIDE SEQUENCE [LARGE SCALE GENOMIC DNA]</scope>
    <source>
        <strain>ATCC VR-885 / DSM 19411 / UW-3/Cx</strain>
    </source>
</reference>
<protein>
    <recommendedName>
        <fullName>Uncharacterized HIT-like protein CT_385</fullName>
    </recommendedName>
</protein>
<proteinExistence type="predicted"/>
<name>YHIT_CHLTR</name>
<dbReference type="EMBL" id="AE001273">
    <property type="protein sequence ID" value="AAC67981.1"/>
    <property type="molecule type" value="Genomic_DNA"/>
</dbReference>
<dbReference type="PIR" id="E71522">
    <property type="entry name" value="E71522"/>
</dbReference>
<dbReference type="RefSeq" id="WP_009871737.1">
    <property type="nucleotide sequence ID" value="NC_000117.1"/>
</dbReference>
<dbReference type="SMR" id="O84390"/>
<dbReference type="FunCoup" id="O84390">
    <property type="interactions" value="240"/>
</dbReference>
<dbReference type="STRING" id="272561.CT_385"/>
<dbReference type="EnsemblBacteria" id="AAC67981">
    <property type="protein sequence ID" value="AAC67981"/>
    <property type="gene ID" value="CT_385"/>
</dbReference>
<dbReference type="KEGG" id="ctr:CT_385"/>
<dbReference type="PATRIC" id="fig|272561.5.peg.415"/>
<dbReference type="HOGENOM" id="CLU_056776_8_1_0"/>
<dbReference type="InParanoid" id="O84390"/>
<dbReference type="OrthoDB" id="9784774at2"/>
<dbReference type="Proteomes" id="UP000000431">
    <property type="component" value="Chromosome"/>
</dbReference>
<dbReference type="GO" id="GO:0005737">
    <property type="term" value="C:cytoplasm"/>
    <property type="evidence" value="ECO:0000318"/>
    <property type="project" value="GO_Central"/>
</dbReference>
<dbReference type="GO" id="GO:0016787">
    <property type="term" value="F:hydrolase activity"/>
    <property type="evidence" value="ECO:0000318"/>
    <property type="project" value="GO_Central"/>
</dbReference>
<dbReference type="Gene3D" id="3.30.428.10">
    <property type="entry name" value="HIT-like"/>
    <property type="match status" value="1"/>
</dbReference>
<dbReference type="InterPro" id="IPR019808">
    <property type="entry name" value="Histidine_triad_CS"/>
</dbReference>
<dbReference type="InterPro" id="IPR001310">
    <property type="entry name" value="Histidine_triad_HIT"/>
</dbReference>
<dbReference type="InterPro" id="IPR011146">
    <property type="entry name" value="HIT-like"/>
</dbReference>
<dbReference type="InterPro" id="IPR036265">
    <property type="entry name" value="HIT-like_sf"/>
</dbReference>
<dbReference type="PANTHER" id="PTHR23089">
    <property type="entry name" value="HISTIDINE TRIAD HIT PROTEIN"/>
    <property type="match status" value="1"/>
</dbReference>
<dbReference type="Pfam" id="PF11969">
    <property type="entry name" value="DcpS_C"/>
    <property type="match status" value="1"/>
</dbReference>
<dbReference type="PRINTS" id="PR00332">
    <property type="entry name" value="HISTRIAD"/>
</dbReference>
<dbReference type="SUPFAM" id="SSF54197">
    <property type="entry name" value="HIT-like"/>
    <property type="match status" value="1"/>
</dbReference>
<dbReference type="PROSITE" id="PS00892">
    <property type="entry name" value="HIT_1"/>
    <property type="match status" value="1"/>
</dbReference>
<dbReference type="PROSITE" id="PS51084">
    <property type="entry name" value="HIT_2"/>
    <property type="match status" value="1"/>
</dbReference>
<gene>
    <name type="ordered locus">CT_385</name>
</gene>
<evidence type="ECO:0000255" key="1">
    <source>
        <dbReference type="PROSITE-ProRule" id="PRU00464"/>
    </source>
</evidence>
<sequence>MTTIFERIIEGAVECDKVFEDENFIVIKDKFPQAPVHLLIIPKKHIEKLQDIQGDDFLLLAEAGKIIQLMARNFGIENGYRVVVNNGLEGGQSVFHLHIHLLGGGLLGSIA</sequence>
<keyword id="KW-1185">Reference proteome</keyword>
<organism>
    <name type="scientific">Chlamydia trachomatis serovar D (strain ATCC VR-885 / DSM 19411 / UW-3/Cx)</name>
    <dbReference type="NCBI Taxonomy" id="272561"/>
    <lineage>
        <taxon>Bacteria</taxon>
        <taxon>Pseudomonadati</taxon>
        <taxon>Chlamydiota</taxon>
        <taxon>Chlamydiia</taxon>
        <taxon>Chlamydiales</taxon>
        <taxon>Chlamydiaceae</taxon>
        <taxon>Chlamydia/Chlamydophila group</taxon>
        <taxon>Chlamydia</taxon>
    </lineage>
</organism>
<accession>O84390</accession>
<feature type="chain" id="PRO_0000109817" description="Uncharacterized HIT-like protein CT_385">
    <location>
        <begin position="1"/>
        <end position="111"/>
    </location>
</feature>
<feature type="domain" description="HIT" evidence="1">
    <location>
        <begin position="4"/>
        <end position="111"/>
    </location>
</feature>
<feature type="short sequence motif" description="Histidine triad motif">
    <location>
        <begin position="96"/>
        <end position="100"/>
    </location>
</feature>